<feature type="chain" id="PRO_0000052871" description="Hemoglobin cathodic subunit beta">
    <location>
        <begin position="1"/>
        <end position="146"/>
    </location>
</feature>
<feature type="domain" description="Globin" evidence="1">
    <location>
        <begin position="2"/>
        <end position="146"/>
    </location>
</feature>
<feature type="binding site" description="distal binding residue">
    <location>
        <position position="63"/>
    </location>
    <ligand>
        <name>heme b</name>
        <dbReference type="ChEBI" id="CHEBI:60344"/>
    </ligand>
    <ligandPart>
        <name>Fe</name>
        <dbReference type="ChEBI" id="CHEBI:18248"/>
    </ligandPart>
</feature>
<feature type="binding site" description="proximal binding residue">
    <location>
        <position position="92"/>
    </location>
    <ligand>
        <name>heme b</name>
        <dbReference type="ChEBI" id="CHEBI:60344"/>
    </ligand>
    <ligandPart>
        <name>Fe</name>
        <dbReference type="ChEBI" id="CHEBI:18248"/>
    </ligandPart>
</feature>
<organism>
    <name type="scientific">Anguilla anguilla</name>
    <name type="common">European freshwater eel</name>
    <name type="synonym">Muraena anguilla</name>
    <dbReference type="NCBI Taxonomy" id="7936"/>
    <lineage>
        <taxon>Eukaryota</taxon>
        <taxon>Metazoa</taxon>
        <taxon>Chordata</taxon>
        <taxon>Craniata</taxon>
        <taxon>Vertebrata</taxon>
        <taxon>Euteleostomi</taxon>
        <taxon>Actinopterygii</taxon>
        <taxon>Neopterygii</taxon>
        <taxon>Teleostei</taxon>
        <taxon>Anguilliformes</taxon>
        <taxon>Anguillidae</taxon>
        <taxon>Anguilla</taxon>
    </lineage>
</organism>
<keyword id="KW-0903">Direct protein sequencing</keyword>
<keyword id="KW-0349">Heme</keyword>
<keyword id="KW-0408">Iron</keyword>
<keyword id="KW-0479">Metal-binding</keyword>
<keyword id="KW-0561">Oxygen transport</keyword>
<keyword id="KW-0813">Transport</keyword>
<protein>
    <recommendedName>
        <fullName>Hemoglobin cathodic subunit beta</fullName>
    </recommendedName>
    <alternativeName>
        <fullName>Hemoglobin cathodic beta chain</fullName>
    </alternativeName>
</protein>
<gene>
    <name type="primary">hbb2</name>
</gene>
<proteinExistence type="evidence at protein level"/>
<accession>P80727</accession>
<dbReference type="SMR" id="P80727"/>
<dbReference type="OMA" id="NFKAMYA"/>
<dbReference type="GO" id="GO:0072562">
    <property type="term" value="C:blood microparticle"/>
    <property type="evidence" value="ECO:0007669"/>
    <property type="project" value="TreeGrafter"/>
</dbReference>
<dbReference type="GO" id="GO:0031838">
    <property type="term" value="C:haptoglobin-hemoglobin complex"/>
    <property type="evidence" value="ECO:0007669"/>
    <property type="project" value="TreeGrafter"/>
</dbReference>
<dbReference type="GO" id="GO:0005833">
    <property type="term" value="C:hemoglobin complex"/>
    <property type="evidence" value="ECO:0007669"/>
    <property type="project" value="InterPro"/>
</dbReference>
<dbReference type="GO" id="GO:0031720">
    <property type="term" value="F:haptoglobin binding"/>
    <property type="evidence" value="ECO:0007669"/>
    <property type="project" value="TreeGrafter"/>
</dbReference>
<dbReference type="GO" id="GO:0020037">
    <property type="term" value="F:heme binding"/>
    <property type="evidence" value="ECO:0007669"/>
    <property type="project" value="InterPro"/>
</dbReference>
<dbReference type="GO" id="GO:0046872">
    <property type="term" value="F:metal ion binding"/>
    <property type="evidence" value="ECO:0007669"/>
    <property type="project" value="UniProtKB-KW"/>
</dbReference>
<dbReference type="GO" id="GO:0043177">
    <property type="term" value="F:organic acid binding"/>
    <property type="evidence" value="ECO:0007669"/>
    <property type="project" value="TreeGrafter"/>
</dbReference>
<dbReference type="GO" id="GO:0019825">
    <property type="term" value="F:oxygen binding"/>
    <property type="evidence" value="ECO:0007669"/>
    <property type="project" value="InterPro"/>
</dbReference>
<dbReference type="GO" id="GO:0005344">
    <property type="term" value="F:oxygen carrier activity"/>
    <property type="evidence" value="ECO:0007669"/>
    <property type="project" value="UniProtKB-KW"/>
</dbReference>
<dbReference type="GO" id="GO:0004601">
    <property type="term" value="F:peroxidase activity"/>
    <property type="evidence" value="ECO:0007669"/>
    <property type="project" value="TreeGrafter"/>
</dbReference>
<dbReference type="GO" id="GO:0042744">
    <property type="term" value="P:hydrogen peroxide catabolic process"/>
    <property type="evidence" value="ECO:0007669"/>
    <property type="project" value="TreeGrafter"/>
</dbReference>
<dbReference type="CDD" id="cd08925">
    <property type="entry name" value="Hb-beta-like"/>
    <property type="match status" value="1"/>
</dbReference>
<dbReference type="FunFam" id="1.10.490.10:FF:000001">
    <property type="entry name" value="Hemoglobin subunit beta"/>
    <property type="match status" value="1"/>
</dbReference>
<dbReference type="Gene3D" id="1.10.490.10">
    <property type="entry name" value="Globins"/>
    <property type="match status" value="1"/>
</dbReference>
<dbReference type="InterPro" id="IPR000971">
    <property type="entry name" value="Globin"/>
</dbReference>
<dbReference type="InterPro" id="IPR009050">
    <property type="entry name" value="Globin-like_sf"/>
</dbReference>
<dbReference type="InterPro" id="IPR012292">
    <property type="entry name" value="Globin/Proto"/>
</dbReference>
<dbReference type="InterPro" id="IPR002337">
    <property type="entry name" value="Hemoglobin_b"/>
</dbReference>
<dbReference type="InterPro" id="IPR050056">
    <property type="entry name" value="Hemoglobin_oxygen_transport"/>
</dbReference>
<dbReference type="PANTHER" id="PTHR11442">
    <property type="entry name" value="HEMOGLOBIN FAMILY MEMBER"/>
    <property type="match status" value="1"/>
</dbReference>
<dbReference type="PANTHER" id="PTHR11442:SF101">
    <property type="entry name" value="HEMOGLOBIN, BETA ADULT 2"/>
    <property type="match status" value="1"/>
</dbReference>
<dbReference type="Pfam" id="PF00042">
    <property type="entry name" value="Globin"/>
    <property type="match status" value="1"/>
</dbReference>
<dbReference type="PRINTS" id="PR00814">
    <property type="entry name" value="BETAHAEM"/>
</dbReference>
<dbReference type="SUPFAM" id="SSF46458">
    <property type="entry name" value="Globin-like"/>
    <property type="match status" value="1"/>
</dbReference>
<dbReference type="PROSITE" id="PS01033">
    <property type="entry name" value="GLOBIN"/>
    <property type="match status" value="1"/>
</dbReference>
<comment type="function">
    <text>Involved in oxygen transport from gills to the various peripheral tissues.</text>
</comment>
<comment type="subunit">
    <text>Heterotetramer of two alpha chains and two beta chains.</text>
</comment>
<comment type="tissue specificity">
    <text>Red blood cells.</text>
</comment>
<comment type="miscellaneous">
    <text>This fish has two hemoglobins: cathodic and anodic. The cathodic Hb and anodic Hb display small and large Bohr effects respectively. In addition, the cathodic Hb displays a reverse Bohr effect and appreciable phosphate effects.</text>
</comment>
<comment type="similarity">
    <text evidence="1">Belongs to the globin family.</text>
</comment>
<reference key="1">
    <citation type="journal article" date="1995" name="J. Biol. Chem.">
        <title>The cathodic hemoglobin of Anguilla anguilla. Amino acid sequence and oxygen equilibria of a reverse Bohr effect hemoglobin with high oxygen affinity and high phosphate sensitivity.</title>
        <authorList>
            <person name="Fago A."/>
            <person name="Carratore V."/>
            <person name="di Prisco G."/>
            <person name="Feuerlein R.J."/>
            <person name="Sottrup-Jensen L."/>
            <person name="Weber R.E."/>
        </authorList>
    </citation>
    <scope>PROTEIN SEQUENCE</scope>
    <source>
        <tissue>Erythrocyte</tissue>
    </source>
</reference>
<evidence type="ECO:0000255" key="1">
    <source>
        <dbReference type="PROSITE-ProRule" id="PRU00238"/>
    </source>
</evidence>
<sequence length="146" mass="15892">VEWSASERSTITSLWGKINVAEIGPQALARVLIVYPWTQRYFGKFGDLSNAAAIQGNAKVAAHGKVVLGALEKAVKNMDDVKGTYSKLSQLHNEKLNVDPDNFRLLGDCLTIVLATKLGAGFPAEIQAVWQKFVAVVVSALSKQYF</sequence>
<name>HBBC_ANGAN</name>